<feature type="chain" id="PRO_1000200565" description="UvrABC system protein C">
    <location>
        <begin position="1"/>
        <end position="594"/>
    </location>
</feature>
<feature type="domain" description="GIY-YIG" evidence="1">
    <location>
        <begin position="14"/>
        <end position="91"/>
    </location>
</feature>
<feature type="domain" description="UVR" evidence="1">
    <location>
        <begin position="196"/>
        <end position="231"/>
    </location>
</feature>
<dbReference type="EMBL" id="CP001598">
    <property type="protein sequence ID" value="ACQ50526.1"/>
    <property type="molecule type" value="Genomic_DNA"/>
</dbReference>
<dbReference type="RefSeq" id="WP_000544304.1">
    <property type="nucleotide sequence ID" value="NC_012659.1"/>
</dbReference>
<dbReference type="SMR" id="C3PAA9"/>
<dbReference type="GeneID" id="45024392"/>
<dbReference type="KEGG" id="bai:BAA_4772"/>
<dbReference type="HOGENOM" id="CLU_014841_3_2_9"/>
<dbReference type="GO" id="GO:0005737">
    <property type="term" value="C:cytoplasm"/>
    <property type="evidence" value="ECO:0007669"/>
    <property type="project" value="UniProtKB-SubCell"/>
</dbReference>
<dbReference type="GO" id="GO:0009380">
    <property type="term" value="C:excinuclease repair complex"/>
    <property type="evidence" value="ECO:0007669"/>
    <property type="project" value="InterPro"/>
</dbReference>
<dbReference type="GO" id="GO:0003677">
    <property type="term" value="F:DNA binding"/>
    <property type="evidence" value="ECO:0007669"/>
    <property type="project" value="UniProtKB-UniRule"/>
</dbReference>
<dbReference type="GO" id="GO:0009381">
    <property type="term" value="F:excinuclease ABC activity"/>
    <property type="evidence" value="ECO:0007669"/>
    <property type="project" value="UniProtKB-UniRule"/>
</dbReference>
<dbReference type="GO" id="GO:0006289">
    <property type="term" value="P:nucleotide-excision repair"/>
    <property type="evidence" value="ECO:0007669"/>
    <property type="project" value="UniProtKB-UniRule"/>
</dbReference>
<dbReference type="GO" id="GO:0009432">
    <property type="term" value="P:SOS response"/>
    <property type="evidence" value="ECO:0007669"/>
    <property type="project" value="UniProtKB-UniRule"/>
</dbReference>
<dbReference type="CDD" id="cd10434">
    <property type="entry name" value="GIY-YIG_UvrC_Cho"/>
    <property type="match status" value="1"/>
</dbReference>
<dbReference type="FunFam" id="1.10.150.20:FF:000005">
    <property type="entry name" value="UvrABC system protein C"/>
    <property type="match status" value="1"/>
</dbReference>
<dbReference type="FunFam" id="3.30.420.340:FF:000002">
    <property type="entry name" value="UvrABC system protein C"/>
    <property type="match status" value="1"/>
</dbReference>
<dbReference type="FunFam" id="3.40.1440.10:FF:000001">
    <property type="entry name" value="UvrABC system protein C"/>
    <property type="match status" value="1"/>
</dbReference>
<dbReference type="FunFam" id="4.10.860.10:FF:000002">
    <property type="entry name" value="UvrABC system protein C"/>
    <property type="match status" value="1"/>
</dbReference>
<dbReference type="Gene3D" id="1.10.150.20">
    <property type="entry name" value="5' to 3' exonuclease, C-terminal subdomain"/>
    <property type="match status" value="1"/>
</dbReference>
<dbReference type="Gene3D" id="3.40.1440.10">
    <property type="entry name" value="GIY-YIG endonuclease"/>
    <property type="match status" value="1"/>
</dbReference>
<dbReference type="Gene3D" id="4.10.860.10">
    <property type="entry name" value="UVR domain"/>
    <property type="match status" value="1"/>
</dbReference>
<dbReference type="Gene3D" id="3.30.420.340">
    <property type="entry name" value="UvrC, RNAse H endonuclease domain"/>
    <property type="match status" value="1"/>
</dbReference>
<dbReference type="HAMAP" id="MF_00203">
    <property type="entry name" value="UvrC"/>
    <property type="match status" value="1"/>
</dbReference>
<dbReference type="InterPro" id="IPR000305">
    <property type="entry name" value="GIY-YIG_endonuc"/>
</dbReference>
<dbReference type="InterPro" id="IPR035901">
    <property type="entry name" value="GIY-YIG_endonuc_sf"/>
</dbReference>
<dbReference type="InterPro" id="IPR047296">
    <property type="entry name" value="GIY-YIG_UvrC_Cho"/>
</dbReference>
<dbReference type="InterPro" id="IPR010994">
    <property type="entry name" value="RuvA_2-like"/>
</dbReference>
<dbReference type="InterPro" id="IPR001943">
    <property type="entry name" value="UVR_dom"/>
</dbReference>
<dbReference type="InterPro" id="IPR036876">
    <property type="entry name" value="UVR_dom_sf"/>
</dbReference>
<dbReference type="InterPro" id="IPR050066">
    <property type="entry name" value="UvrABC_protein_C"/>
</dbReference>
<dbReference type="InterPro" id="IPR004791">
    <property type="entry name" value="UvrC"/>
</dbReference>
<dbReference type="InterPro" id="IPR001162">
    <property type="entry name" value="UvrC_RNase_H_dom"/>
</dbReference>
<dbReference type="InterPro" id="IPR038476">
    <property type="entry name" value="UvrC_RNase_H_dom_sf"/>
</dbReference>
<dbReference type="NCBIfam" id="NF001824">
    <property type="entry name" value="PRK00558.1-5"/>
    <property type="match status" value="1"/>
</dbReference>
<dbReference type="NCBIfam" id="TIGR00194">
    <property type="entry name" value="uvrC"/>
    <property type="match status" value="1"/>
</dbReference>
<dbReference type="PANTHER" id="PTHR30562:SF1">
    <property type="entry name" value="UVRABC SYSTEM PROTEIN C"/>
    <property type="match status" value="1"/>
</dbReference>
<dbReference type="PANTHER" id="PTHR30562">
    <property type="entry name" value="UVRC/OXIDOREDUCTASE"/>
    <property type="match status" value="1"/>
</dbReference>
<dbReference type="Pfam" id="PF01541">
    <property type="entry name" value="GIY-YIG"/>
    <property type="match status" value="1"/>
</dbReference>
<dbReference type="Pfam" id="PF02151">
    <property type="entry name" value="UVR"/>
    <property type="match status" value="1"/>
</dbReference>
<dbReference type="Pfam" id="PF22920">
    <property type="entry name" value="UvrC_RNaseH"/>
    <property type="match status" value="1"/>
</dbReference>
<dbReference type="Pfam" id="PF08459">
    <property type="entry name" value="UvrC_RNaseH_dom"/>
    <property type="match status" value="1"/>
</dbReference>
<dbReference type="SMART" id="SM00465">
    <property type="entry name" value="GIYc"/>
    <property type="match status" value="1"/>
</dbReference>
<dbReference type="SUPFAM" id="SSF46600">
    <property type="entry name" value="C-terminal UvrC-binding domain of UvrB"/>
    <property type="match status" value="1"/>
</dbReference>
<dbReference type="SUPFAM" id="SSF82771">
    <property type="entry name" value="GIY-YIG endonuclease"/>
    <property type="match status" value="1"/>
</dbReference>
<dbReference type="SUPFAM" id="SSF47781">
    <property type="entry name" value="RuvA domain 2-like"/>
    <property type="match status" value="1"/>
</dbReference>
<dbReference type="PROSITE" id="PS50164">
    <property type="entry name" value="GIY_YIG"/>
    <property type="match status" value="1"/>
</dbReference>
<dbReference type="PROSITE" id="PS50151">
    <property type="entry name" value="UVR"/>
    <property type="match status" value="1"/>
</dbReference>
<dbReference type="PROSITE" id="PS50165">
    <property type="entry name" value="UVRC"/>
    <property type="match status" value="1"/>
</dbReference>
<comment type="function">
    <text evidence="1">The UvrABC repair system catalyzes the recognition and processing of DNA lesions. UvrC both incises the 5' and 3' sides of the lesion. The N-terminal half is responsible for the 3' incision and the C-terminal half is responsible for the 5' incision.</text>
</comment>
<comment type="subunit">
    <text evidence="1">Interacts with UvrB in an incision complex.</text>
</comment>
<comment type="subcellular location">
    <subcellularLocation>
        <location evidence="1">Cytoplasm</location>
    </subcellularLocation>
</comment>
<comment type="similarity">
    <text evidence="1">Belongs to the UvrC family.</text>
</comment>
<organism>
    <name type="scientific">Bacillus anthracis (strain A0248)</name>
    <dbReference type="NCBI Taxonomy" id="592021"/>
    <lineage>
        <taxon>Bacteria</taxon>
        <taxon>Bacillati</taxon>
        <taxon>Bacillota</taxon>
        <taxon>Bacilli</taxon>
        <taxon>Bacillales</taxon>
        <taxon>Bacillaceae</taxon>
        <taxon>Bacillus</taxon>
        <taxon>Bacillus cereus group</taxon>
    </lineage>
</organism>
<reference key="1">
    <citation type="submission" date="2009-04" db="EMBL/GenBank/DDBJ databases">
        <title>Genome sequence of Bacillus anthracis A0248.</title>
        <authorList>
            <person name="Dodson R.J."/>
            <person name="Munk A.C."/>
            <person name="Bruce D."/>
            <person name="Detter C."/>
            <person name="Tapia R."/>
            <person name="Sutton G."/>
            <person name="Sims D."/>
            <person name="Brettin T."/>
        </authorList>
    </citation>
    <scope>NUCLEOTIDE SEQUENCE [LARGE SCALE GENOMIC DNA]</scope>
    <source>
        <strain>A0248</strain>
    </source>
</reference>
<proteinExistence type="inferred from homology"/>
<keyword id="KW-0963">Cytoplasm</keyword>
<keyword id="KW-0227">DNA damage</keyword>
<keyword id="KW-0228">DNA excision</keyword>
<keyword id="KW-0234">DNA repair</keyword>
<keyword id="KW-0267">Excision nuclease</keyword>
<keyword id="KW-0742">SOS response</keyword>
<protein>
    <recommendedName>
        <fullName evidence="1">UvrABC system protein C</fullName>
        <shortName evidence="1">Protein UvrC</shortName>
    </recommendedName>
    <alternativeName>
        <fullName evidence="1">Excinuclease ABC subunit C</fullName>
    </alternativeName>
</protein>
<accession>C3PAA9</accession>
<evidence type="ECO:0000255" key="1">
    <source>
        <dbReference type="HAMAP-Rule" id="MF_00203"/>
    </source>
</evidence>
<name>UVRC_BACAA</name>
<sequence>MHEHLKEKLAILPDQPGCYLMKDRQGTVIYVGKAKVLKNRVRSYFTGSHDGKTLRLVGEIVDFEYIVTSSNLEALILELNLIKKHDPKYNIQLKDDKTYPFIKITAEKQPRLLITRNVKKDKGKYFGPYPNAQSAHETKKLLDRMYPLRKCSNMPDKVCLYYHMGQCLAPCVKEVTEEQNKEIVDEIIKFLNGGHKEVRSELETKMYEASEKLEFERAKELRDQIAHIDAIMEKQKMIMSDLVDRDVFGYAVDKGWMCVQVFFVRKGKLIERDVSMFPIYDEPEEGFLTFIGQFYENSSHFKPKEIVVPGSIDSELVERFLEVEATQPKRGKKKDLVELANKNAKIALEEKFYLIERDEERTIKAVENLGKQLGIETPYRIEAFDNSNIQGTNPVSAMIAFIDGKPAKKEYRKYKIKTVQGPDDYESMREVVRRRYTRALKEGLPLPDLIIIDGGKGHLAAASDVLENELGLYIPMAGLVKDDKHKTSHLIIGDPPEPVMLERNSQEFYLLQRVQDEVHRFAITFHRQLHGKSVIQSALDDIPGIGDKRKKVLLKHFGSLKKMKEASIEEFVEAGMPKNVAETIYTYLTDKKTL</sequence>
<gene>
    <name evidence="1" type="primary">uvrC</name>
    <name type="ordered locus">BAA_4772</name>
</gene>